<name>CHA9_LYMDI</name>
<organism>
    <name type="scientific">Lymantria dispar</name>
    <name type="common">Gypsy moth</name>
    <name type="synonym">Porthetria dispar</name>
    <dbReference type="NCBI Taxonomy" id="13123"/>
    <lineage>
        <taxon>Eukaryota</taxon>
        <taxon>Metazoa</taxon>
        <taxon>Ecdysozoa</taxon>
        <taxon>Arthropoda</taxon>
        <taxon>Hexapoda</taxon>
        <taxon>Insecta</taxon>
        <taxon>Pterygota</taxon>
        <taxon>Neoptera</taxon>
        <taxon>Endopterygota</taxon>
        <taxon>Lepidoptera</taxon>
        <taxon>Glossata</taxon>
        <taxon>Ditrysia</taxon>
        <taxon>Noctuoidea</taxon>
        <taxon>Erebidae</taxon>
        <taxon>Lymantriinae</taxon>
        <taxon>Lymantria</taxon>
    </lineage>
</organism>
<reference key="1">
    <citation type="journal article" date="1994" name="J. Mol. Evol.">
        <title>Evolution of chorion gene families in lepidoptera: characterization of 15 cDNAs from the gypsy moth.</title>
        <authorList>
            <person name="Leclerc R.F."/>
            <person name="Regier J.C."/>
        </authorList>
    </citation>
    <scope>NUCLEOTIDE SEQUENCE [MRNA]</scope>
    <source>
        <tissue>Choriogenic follicle</tissue>
    </source>
</reference>
<feature type="chain" id="PRO_0000168188" description="Chorion class A proteins Ld9">
    <location>
        <begin position="1" status="less than"/>
        <end position="121"/>
    </location>
</feature>
<feature type="non-terminal residue">
    <location>
        <position position="1"/>
    </location>
</feature>
<proteinExistence type="evidence at transcript level"/>
<keyword id="KW-0677">Repeat</keyword>
<sequence length="121" mass="11617">RAAVAADRGIIGGYGLGAPYGLAGGYGLEVPYGLAGYADYRYPAGACGIDAYGGIGEGNVAVAGELPVAGTTAVAGQVPIMGAVKFGGDVCAAGSVSIAGKCACGCGDYGYGYGLGAPYLY</sequence>
<accession>P50603</accession>
<dbReference type="EMBL" id="U04661">
    <property type="protein sequence ID" value="AAA67861.1"/>
    <property type="molecule type" value="mRNA"/>
</dbReference>
<dbReference type="GO" id="GO:0042600">
    <property type="term" value="C:egg chorion"/>
    <property type="evidence" value="ECO:0007669"/>
    <property type="project" value="InterPro"/>
</dbReference>
<dbReference type="GO" id="GO:0005213">
    <property type="term" value="F:structural constituent of egg chorion"/>
    <property type="evidence" value="ECO:0007669"/>
    <property type="project" value="InterPro"/>
</dbReference>
<dbReference type="GO" id="GO:0007304">
    <property type="term" value="P:chorion-containing eggshell formation"/>
    <property type="evidence" value="ECO:0007669"/>
    <property type="project" value="InterPro"/>
</dbReference>
<dbReference type="InterPro" id="IPR002635">
    <property type="entry name" value="Chorion"/>
</dbReference>
<dbReference type="Pfam" id="PF01723">
    <property type="entry name" value="Chorion_1"/>
    <property type="match status" value="1"/>
</dbReference>
<evidence type="ECO:0000305" key="1"/>
<comment type="function">
    <text>This protein is one of many from the eggshell of the gypsy moth.</text>
</comment>
<comment type="similarity">
    <text evidence="1">Belongs to the chorion protein family.</text>
</comment>
<protein>
    <recommendedName>
        <fullName>Chorion class A proteins Ld9</fullName>
    </recommendedName>
</protein>